<name>RL25_ENTFA</name>
<dbReference type="EMBL" id="AE016830">
    <property type="protein sequence ID" value="AAO80633.1"/>
    <property type="molecule type" value="Genomic_DNA"/>
</dbReference>
<dbReference type="RefSeq" id="NP_814563.1">
    <property type="nucleotide sequence ID" value="NC_004668.1"/>
</dbReference>
<dbReference type="RefSeq" id="WP_002358773.1">
    <property type="nucleotide sequence ID" value="NZ_KE136527.1"/>
</dbReference>
<dbReference type="SMR" id="Q837L6"/>
<dbReference type="STRING" id="226185.EF_0820"/>
<dbReference type="EnsemblBacteria" id="AAO80633">
    <property type="protein sequence ID" value="AAO80633"/>
    <property type="gene ID" value="EF_0820"/>
</dbReference>
<dbReference type="KEGG" id="efa:EF0820"/>
<dbReference type="PATRIC" id="fig|226185.45.peg.2755"/>
<dbReference type="eggNOG" id="COG1825">
    <property type="taxonomic scope" value="Bacteria"/>
</dbReference>
<dbReference type="HOGENOM" id="CLU_075939_2_0_9"/>
<dbReference type="Proteomes" id="UP000001415">
    <property type="component" value="Chromosome"/>
</dbReference>
<dbReference type="GO" id="GO:0022625">
    <property type="term" value="C:cytosolic large ribosomal subunit"/>
    <property type="evidence" value="ECO:0007669"/>
    <property type="project" value="TreeGrafter"/>
</dbReference>
<dbReference type="GO" id="GO:0008097">
    <property type="term" value="F:5S rRNA binding"/>
    <property type="evidence" value="ECO:0007669"/>
    <property type="project" value="InterPro"/>
</dbReference>
<dbReference type="GO" id="GO:0003735">
    <property type="term" value="F:structural constituent of ribosome"/>
    <property type="evidence" value="ECO:0007669"/>
    <property type="project" value="InterPro"/>
</dbReference>
<dbReference type="GO" id="GO:0006412">
    <property type="term" value="P:translation"/>
    <property type="evidence" value="ECO:0007669"/>
    <property type="project" value="UniProtKB-UniRule"/>
</dbReference>
<dbReference type="CDD" id="cd00495">
    <property type="entry name" value="Ribosomal_L25_TL5_CTC"/>
    <property type="match status" value="1"/>
</dbReference>
<dbReference type="Gene3D" id="2.170.120.20">
    <property type="entry name" value="Ribosomal protein L25, beta domain"/>
    <property type="match status" value="1"/>
</dbReference>
<dbReference type="Gene3D" id="2.40.240.10">
    <property type="entry name" value="Ribosomal Protein L25, Chain P"/>
    <property type="match status" value="1"/>
</dbReference>
<dbReference type="HAMAP" id="MF_01334">
    <property type="entry name" value="Ribosomal_bL25_CTC"/>
    <property type="match status" value="1"/>
</dbReference>
<dbReference type="InterPro" id="IPR020056">
    <property type="entry name" value="Rbsml_bL25/Gln-tRNA_synth_N"/>
</dbReference>
<dbReference type="InterPro" id="IPR011035">
    <property type="entry name" value="Ribosomal_bL25/Gln-tRNA_synth"/>
</dbReference>
<dbReference type="InterPro" id="IPR020057">
    <property type="entry name" value="Ribosomal_bL25_b-dom"/>
</dbReference>
<dbReference type="InterPro" id="IPR037121">
    <property type="entry name" value="Ribosomal_bL25_C"/>
</dbReference>
<dbReference type="InterPro" id="IPR001021">
    <property type="entry name" value="Ribosomal_bL25_long"/>
</dbReference>
<dbReference type="InterPro" id="IPR029751">
    <property type="entry name" value="Ribosomal_L25_dom"/>
</dbReference>
<dbReference type="InterPro" id="IPR020930">
    <property type="entry name" value="Ribosomal_uL5_bac-type"/>
</dbReference>
<dbReference type="NCBIfam" id="TIGR00731">
    <property type="entry name" value="bL25_bact_ctc"/>
    <property type="match status" value="1"/>
</dbReference>
<dbReference type="NCBIfam" id="NF004133">
    <property type="entry name" value="PRK05618.2-4"/>
    <property type="match status" value="1"/>
</dbReference>
<dbReference type="PANTHER" id="PTHR33284">
    <property type="entry name" value="RIBOSOMAL PROTEIN L25/GLN-TRNA SYNTHETASE, ANTI-CODON-BINDING DOMAIN-CONTAINING PROTEIN"/>
    <property type="match status" value="1"/>
</dbReference>
<dbReference type="PANTHER" id="PTHR33284:SF1">
    <property type="entry name" value="RIBOSOMAL PROTEIN L25_GLN-TRNA SYNTHETASE, ANTI-CODON-BINDING DOMAIN-CONTAINING PROTEIN"/>
    <property type="match status" value="1"/>
</dbReference>
<dbReference type="Pfam" id="PF01386">
    <property type="entry name" value="Ribosomal_L25p"/>
    <property type="match status" value="1"/>
</dbReference>
<dbReference type="Pfam" id="PF14693">
    <property type="entry name" value="Ribosomal_TL5_C"/>
    <property type="match status" value="1"/>
</dbReference>
<dbReference type="SUPFAM" id="SSF50715">
    <property type="entry name" value="Ribosomal protein L25-like"/>
    <property type="match status" value="1"/>
</dbReference>
<evidence type="ECO:0000255" key="1">
    <source>
        <dbReference type="HAMAP-Rule" id="MF_01334"/>
    </source>
</evidence>
<evidence type="ECO:0000256" key="2">
    <source>
        <dbReference type="SAM" id="MobiDB-lite"/>
    </source>
</evidence>
<evidence type="ECO:0000305" key="3"/>
<gene>
    <name evidence="1" type="primary">rplY</name>
    <name evidence="1" type="synonym">ctc</name>
    <name type="ordered locus">EF_0820</name>
</gene>
<accession>Q837L6</accession>
<organism>
    <name type="scientific">Enterococcus faecalis (strain ATCC 700802 / V583)</name>
    <dbReference type="NCBI Taxonomy" id="226185"/>
    <lineage>
        <taxon>Bacteria</taxon>
        <taxon>Bacillati</taxon>
        <taxon>Bacillota</taxon>
        <taxon>Bacilli</taxon>
        <taxon>Lactobacillales</taxon>
        <taxon>Enterococcaceae</taxon>
        <taxon>Enterococcus</taxon>
    </lineage>
</organism>
<protein>
    <recommendedName>
        <fullName evidence="1">Large ribosomal subunit protein bL25</fullName>
    </recommendedName>
    <alternativeName>
        <fullName evidence="3">50S ribosomal protein L25</fullName>
    </alternativeName>
    <alternativeName>
        <fullName evidence="1">General stress protein CTC</fullName>
    </alternativeName>
</protein>
<sequence>MSVQLEVKERAIRPRSLRNQLRHEGKVPAIVYGYQIESTPIYFEEKDLSKILREHGANTVIKMTVDGKNINTLMSKAQLDTFTGQMLHVEFLSVNMKETTEVEAEVQLIGESAGVKAGGTLAQNLYTVLVAATPDKLPESIEVDITNLEIGDALTIADLPEHKDYEILTDPEEQLVAIVEAQTAPEEEEGTAAETTEPELAE</sequence>
<reference key="1">
    <citation type="journal article" date="2003" name="Science">
        <title>Role of mobile DNA in the evolution of vancomycin-resistant Enterococcus faecalis.</title>
        <authorList>
            <person name="Paulsen I.T."/>
            <person name="Banerjei L."/>
            <person name="Myers G.S.A."/>
            <person name="Nelson K.E."/>
            <person name="Seshadri R."/>
            <person name="Read T.D."/>
            <person name="Fouts D.E."/>
            <person name="Eisen J.A."/>
            <person name="Gill S.R."/>
            <person name="Heidelberg J.F."/>
            <person name="Tettelin H."/>
            <person name="Dodson R.J."/>
            <person name="Umayam L.A."/>
            <person name="Brinkac L.M."/>
            <person name="Beanan M.J."/>
            <person name="Daugherty S.C."/>
            <person name="DeBoy R.T."/>
            <person name="Durkin S.A."/>
            <person name="Kolonay J.F."/>
            <person name="Madupu R."/>
            <person name="Nelson W.C."/>
            <person name="Vamathevan J.J."/>
            <person name="Tran B."/>
            <person name="Upton J."/>
            <person name="Hansen T."/>
            <person name="Shetty J."/>
            <person name="Khouri H.M."/>
            <person name="Utterback T.R."/>
            <person name="Radune D."/>
            <person name="Ketchum K.A."/>
            <person name="Dougherty B.A."/>
            <person name="Fraser C.M."/>
        </authorList>
    </citation>
    <scope>NUCLEOTIDE SEQUENCE [LARGE SCALE GENOMIC DNA]</scope>
    <source>
        <strain>ATCC 700802 / V583</strain>
    </source>
</reference>
<reference key="2">
    <citation type="journal article" date="2005" name="J. Biol. Chem.">
        <title>The crucial role of conserved intermolecular H-bonds inaccessible to the solvent in formation and stabilization of the TL5.5 SrRNA complex.</title>
        <authorList>
            <person name="Gongadze G.M."/>
            <person name="Korepanov A.P."/>
            <person name="Stolboushkina E.A."/>
            <person name="Zelinskaya N.V."/>
            <person name="Korobeinikova A.V."/>
            <person name="Ruzanov M.V."/>
            <person name="Eliseev B.D."/>
            <person name="Nikonov O.S."/>
            <person name="Nikonov S.V."/>
            <person name="Garber M.B."/>
            <person name="Lim V.I."/>
        </authorList>
    </citation>
    <scope>DISCUSSION OF SEQUENCE</scope>
</reference>
<comment type="function">
    <text evidence="1">This is one of the proteins that binds to the 5S RNA in the ribosome where it forms part of the central protuberance.</text>
</comment>
<comment type="subunit">
    <text evidence="1">Part of the 50S ribosomal subunit; part of the 5S rRNA/L5/L18/L25 subcomplex. Contacts the 5S rRNA. Binds to the 5S rRNA independently of L5 and L18.</text>
</comment>
<comment type="similarity">
    <text evidence="1">Belongs to the bacterial ribosomal protein bL25 family. CTC subfamily.</text>
</comment>
<proteinExistence type="inferred from homology"/>
<feature type="chain" id="PRO_0000181548" description="Large ribosomal subunit protein bL25">
    <location>
        <begin position="1"/>
        <end position="202"/>
    </location>
</feature>
<feature type="region of interest" description="Disordered" evidence="2">
    <location>
        <begin position="182"/>
        <end position="202"/>
    </location>
</feature>
<feature type="compositionally biased region" description="Acidic residues" evidence="2">
    <location>
        <begin position="185"/>
        <end position="202"/>
    </location>
</feature>
<keyword id="KW-1185">Reference proteome</keyword>
<keyword id="KW-0687">Ribonucleoprotein</keyword>
<keyword id="KW-0689">Ribosomal protein</keyword>
<keyword id="KW-0694">RNA-binding</keyword>
<keyword id="KW-0699">rRNA-binding</keyword>